<reference key="1">
    <citation type="journal article" date="2004" name="Am. J. Bot.">
        <title>A phylogeny of legumes (Leguminosae) based on analysis of the plastid matK gene resolves many well-supported subclades within the family.</title>
        <authorList>
            <person name="Wojciechowski M.F."/>
            <person name="Lavin M."/>
            <person name="Sanderson M.J."/>
        </authorList>
        <dbReference type="AGRICOLA" id="IND43661289"/>
    </citation>
    <scope>NUCLEOTIDE SEQUENCE [GENOMIC DNA]</scope>
</reference>
<protein>
    <recommendedName>
        <fullName evidence="1">Maturase K</fullName>
    </recommendedName>
    <alternativeName>
        <fullName evidence="1">Intron maturase</fullName>
    </alternativeName>
</protein>
<name>MATK_LUPAG</name>
<proteinExistence type="inferred from homology"/>
<dbReference type="EMBL" id="AY386956">
    <property type="protein sequence ID" value="AAQ92034.1"/>
    <property type="molecule type" value="Genomic_DNA"/>
</dbReference>
<dbReference type="GO" id="GO:0009507">
    <property type="term" value="C:chloroplast"/>
    <property type="evidence" value="ECO:0007669"/>
    <property type="project" value="UniProtKB-SubCell"/>
</dbReference>
<dbReference type="GO" id="GO:0003723">
    <property type="term" value="F:RNA binding"/>
    <property type="evidence" value="ECO:0007669"/>
    <property type="project" value="UniProtKB-KW"/>
</dbReference>
<dbReference type="GO" id="GO:0006397">
    <property type="term" value="P:mRNA processing"/>
    <property type="evidence" value="ECO:0007669"/>
    <property type="project" value="UniProtKB-KW"/>
</dbReference>
<dbReference type="GO" id="GO:0008380">
    <property type="term" value="P:RNA splicing"/>
    <property type="evidence" value="ECO:0007669"/>
    <property type="project" value="UniProtKB-UniRule"/>
</dbReference>
<dbReference type="GO" id="GO:0008033">
    <property type="term" value="P:tRNA processing"/>
    <property type="evidence" value="ECO:0007669"/>
    <property type="project" value="UniProtKB-KW"/>
</dbReference>
<dbReference type="HAMAP" id="MF_01390">
    <property type="entry name" value="MatK"/>
    <property type="match status" value="1"/>
</dbReference>
<dbReference type="InterPro" id="IPR024937">
    <property type="entry name" value="Domain_X"/>
</dbReference>
<dbReference type="InterPro" id="IPR002866">
    <property type="entry name" value="Maturase_MatK"/>
</dbReference>
<dbReference type="InterPro" id="IPR024942">
    <property type="entry name" value="Maturase_MatK_N"/>
</dbReference>
<dbReference type="PANTHER" id="PTHR34811">
    <property type="entry name" value="MATURASE K"/>
    <property type="match status" value="1"/>
</dbReference>
<dbReference type="PANTHER" id="PTHR34811:SF1">
    <property type="entry name" value="MATURASE K"/>
    <property type="match status" value="1"/>
</dbReference>
<dbReference type="Pfam" id="PF01348">
    <property type="entry name" value="Intron_maturas2"/>
    <property type="match status" value="1"/>
</dbReference>
<dbReference type="Pfam" id="PF01824">
    <property type="entry name" value="MatK_N"/>
    <property type="match status" value="1"/>
</dbReference>
<evidence type="ECO:0000255" key="1">
    <source>
        <dbReference type="HAMAP-Rule" id="MF_01390"/>
    </source>
</evidence>
<sequence>MEEYQVYLELDISRQQHLLYPLIFREYIYGLVYGHDFNGSIFLENLDYDNKSSLLIVKRLITRMDQQNHLIISANDSKKNQFLSYNKNLYSQIISEGFAIVVEIPLSLQLNSSSEESKIIKYYKNLRSIHSIFPFFEDKLTYLNYVSDARIPYPIHLXXXXXXXXXXXXXXPLFHLLRLFFYEYCNWNNLITPKKSISTFSKSNLRVFLFLYNFYVCQYESIFLFLRNKSSHLRLTSFIVLFERIYFYGKIEHFLEVFAKDFSSTFFKELFIHYVRYQEKYILASKNASLLMNKWKNYLIRLWQYHFDVWSQPRTIQINQFSEGSFRLLGYFSNVRLNRSAVRSQMLENSFLIEIVMKKLETIVPIIPLIRSLAKAKFCNVLGHPISKPVWADSSDFYIIDRFLQICRNLSHYYNGSSKKKSLYRVKYILRLSCIKTLARKHKSTVRAFLKRLGSEKLLEEFFTEEEEILSLVFQRVSSTLQGLYRGRVWYLDIIFSNDLVNHE</sequence>
<accession>Q5YJU6</accession>
<comment type="function">
    <text evidence="1">Usually encoded in the trnK tRNA gene intron. Probably assists in splicing its own and other chloroplast group II introns.</text>
</comment>
<comment type="subcellular location">
    <subcellularLocation>
        <location>Plastid</location>
        <location>Chloroplast</location>
    </subcellularLocation>
</comment>
<comment type="similarity">
    <text evidence="1">Belongs to the intron maturase 2 family. MatK subfamily.</text>
</comment>
<feature type="chain" id="PRO_0000143493" description="Maturase K">
    <location>
        <begin position="1"/>
        <end position="504"/>
    </location>
</feature>
<organism>
    <name type="scientific">Lupinus argenteus</name>
    <name type="common">Silvery lupine</name>
    <dbReference type="NCBI Taxonomy" id="53216"/>
    <lineage>
        <taxon>Eukaryota</taxon>
        <taxon>Viridiplantae</taxon>
        <taxon>Streptophyta</taxon>
        <taxon>Embryophyta</taxon>
        <taxon>Tracheophyta</taxon>
        <taxon>Spermatophyta</taxon>
        <taxon>Magnoliopsida</taxon>
        <taxon>eudicotyledons</taxon>
        <taxon>Gunneridae</taxon>
        <taxon>Pentapetalae</taxon>
        <taxon>rosids</taxon>
        <taxon>fabids</taxon>
        <taxon>Fabales</taxon>
        <taxon>Fabaceae</taxon>
        <taxon>Papilionoideae</taxon>
        <taxon>50 kb inversion clade</taxon>
        <taxon>genistoids sensu lato</taxon>
        <taxon>core genistoids</taxon>
        <taxon>Genisteae</taxon>
        <taxon>Lupinus</taxon>
    </lineage>
</organism>
<gene>
    <name evidence="1" type="primary">matK</name>
</gene>
<keyword id="KW-0150">Chloroplast</keyword>
<keyword id="KW-0507">mRNA processing</keyword>
<keyword id="KW-0934">Plastid</keyword>
<keyword id="KW-0694">RNA-binding</keyword>
<keyword id="KW-0819">tRNA processing</keyword>
<geneLocation type="chloroplast"/>